<proteinExistence type="inferred from homology"/>
<evidence type="ECO:0000255" key="1">
    <source>
        <dbReference type="HAMAP-Rule" id="MF_01633"/>
    </source>
</evidence>
<gene>
    <name evidence="1" type="primary">queC</name>
    <name type="ordered locus">RSc0738</name>
</gene>
<feature type="chain" id="PRO_0000246897" description="7-cyano-7-deazaguanine synthase">
    <location>
        <begin position="1"/>
        <end position="224"/>
    </location>
</feature>
<feature type="binding site" evidence="1">
    <location>
        <begin position="9"/>
        <end position="19"/>
    </location>
    <ligand>
        <name>ATP</name>
        <dbReference type="ChEBI" id="CHEBI:30616"/>
    </ligand>
</feature>
<feature type="binding site" evidence="1">
    <location>
        <position position="189"/>
    </location>
    <ligand>
        <name>Zn(2+)</name>
        <dbReference type="ChEBI" id="CHEBI:29105"/>
    </ligand>
</feature>
<feature type="binding site" evidence="1">
    <location>
        <position position="199"/>
    </location>
    <ligand>
        <name>Zn(2+)</name>
        <dbReference type="ChEBI" id="CHEBI:29105"/>
    </ligand>
</feature>
<feature type="binding site" evidence="1">
    <location>
        <position position="202"/>
    </location>
    <ligand>
        <name>Zn(2+)</name>
        <dbReference type="ChEBI" id="CHEBI:29105"/>
    </ligand>
</feature>
<feature type="binding site" evidence="1">
    <location>
        <position position="205"/>
    </location>
    <ligand>
        <name>Zn(2+)</name>
        <dbReference type="ChEBI" id="CHEBI:29105"/>
    </ligand>
</feature>
<keyword id="KW-0067">ATP-binding</keyword>
<keyword id="KW-0436">Ligase</keyword>
<keyword id="KW-0479">Metal-binding</keyword>
<keyword id="KW-0547">Nucleotide-binding</keyword>
<keyword id="KW-0671">Queuosine biosynthesis</keyword>
<keyword id="KW-1185">Reference proteome</keyword>
<keyword id="KW-0862">Zinc</keyword>
<accession>Q8Y1F2</accession>
<name>QUEC_RALN1</name>
<comment type="function">
    <text evidence="1">Catalyzes the ATP-dependent conversion of 7-carboxy-7-deazaguanine (CDG) to 7-cyano-7-deazaguanine (preQ(0)).</text>
</comment>
<comment type="catalytic activity">
    <reaction evidence="1">
        <text>7-carboxy-7-deazaguanine + NH4(+) + ATP = 7-cyano-7-deazaguanine + ADP + phosphate + H2O + H(+)</text>
        <dbReference type="Rhea" id="RHEA:27982"/>
        <dbReference type="ChEBI" id="CHEBI:15377"/>
        <dbReference type="ChEBI" id="CHEBI:15378"/>
        <dbReference type="ChEBI" id="CHEBI:28938"/>
        <dbReference type="ChEBI" id="CHEBI:30616"/>
        <dbReference type="ChEBI" id="CHEBI:43474"/>
        <dbReference type="ChEBI" id="CHEBI:45075"/>
        <dbReference type="ChEBI" id="CHEBI:61036"/>
        <dbReference type="ChEBI" id="CHEBI:456216"/>
        <dbReference type="EC" id="6.3.4.20"/>
    </reaction>
</comment>
<comment type="cofactor">
    <cofactor evidence="1">
        <name>Zn(2+)</name>
        <dbReference type="ChEBI" id="CHEBI:29105"/>
    </cofactor>
    <text evidence="1">Binds 1 zinc ion per subunit.</text>
</comment>
<comment type="pathway">
    <text evidence="1">Purine metabolism; 7-cyano-7-deazaguanine biosynthesis.</text>
</comment>
<comment type="similarity">
    <text evidence="1">Belongs to the QueC family.</text>
</comment>
<protein>
    <recommendedName>
        <fullName evidence="1">7-cyano-7-deazaguanine synthase</fullName>
        <ecNumber evidence="1">6.3.4.20</ecNumber>
    </recommendedName>
    <alternativeName>
        <fullName evidence="1">7-cyano-7-carbaguanine synthase</fullName>
    </alternativeName>
    <alternativeName>
        <fullName evidence="1">PreQ(0) synthase</fullName>
    </alternativeName>
    <alternativeName>
        <fullName evidence="1">Queuosine biosynthesis protein QueC</fullName>
    </alternativeName>
</protein>
<dbReference type="EC" id="6.3.4.20" evidence="1"/>
<dbReference type="EMBL" id="AL646052">
    <property type="protein sequence ID" value="CAD14268.1"/>
    <property type="molecule type" value="Genomic_DNA"/>
</dbReference>
<dbReference type="RefSeq" id="WP_011000693.1">
    <property type="nucleotide sequence ID" value="NC_003295.1"/>
</dbReference>
<dbReference type="SMR" id="Q8Y1F2"/>
<dbReference type="STRING" id="267608.RSc0738"/>
<dbReference type="EnsemblBacteria" id="CAD14268">
    <property type="protein sequence ID" value="CAD14268"/>
    <property type="gene ID" value="RSc0738"/>
</dbReference>
<dbReference type="KEGG" id="rso:RSc0738"/>
<dbReference type="eggNOG" id="COG0603">
    <property type="taxonomic scope" value="Bacteria"/>
</dbReference>
<dbReference type="HOGENOM" id="CLU_081854_1_0_4"/>
<dbReference type="UniPathway" id="UPA00391"/>
<dbReference type="Proteomes" id="UP000001436">
    <property type="component" value="Chromosome"/>
</dbReference>
<dbReference type="GO" id="GO:0005524">
    <property type="term" value="F:ATP binding"/>
    <property type="evidence" value="ECO:0007669"/>
    <property type="project" value="UniProtKB-UniRule"/>
</dbReference>
<dbReference type="GO" id="GO:0016879">
    <property type="term" value="F:ligase activity, forming carbon-nitrogen bonds"/>
    <property type="evidence" value="ECO:0007669"/>
    <property type="project" value="UniProtKB-UniRule"/>
</dbReference>
<dbReference type="GO" id="GO:0008270">
    <property type="term" value="F:zinc ion binding"/>
    <property type="evidence" value="ECO:0007669"/>
    <property type="project" value="UniProtKB-UniRule"/>
</dbReference>
<dbReference type="GO" id="GO:0008616">
    <property type="term" value="P:queuosine biosynthetic process"/>
    <property type="evidence" value="ECO:0007669"/>
    <property type="project" value="UniProtKB-UniRule"/>
</dbReference>
<dbReference type="CDD" id="cd01995">
    <property type="entry name" value="QueC-like"/>
    <property type="match status" value="1"/>
</dbReference>
<dbReference type="FunFam" id="3.40.50.620:FF:000131">
    <property type="entry name" value="7-cyano-7-deazaguanine synthase"/>
    <property type="match status" value="1"/>
</dbReference>
<dbReference type="Gene3D" id="3.40.50.620">
    <property type="entry name" value="HUPs"/>
    <property type="match status" value="1"/>
</dbReference>
<dbReference type="HAMAP" id="MF_01633">
    <property type="entry name" value="QueC"/>
    <property type="match status" value="1"/>
</dbReference>
<dbReference type="InterPro" id="IPR018317">
    <property type="entry name" value="QueC"/>
</dbReference>
<dbReference type="InterPro" id="IPR014729">
    <property type="entry name" value="Rossmann-like_a/b/a_fold"/>
</dbReference>
<dbReference type="NCBIfam" id="TIGR00364">
    <property type="entry name" value="7-cyano-7-deazaguanine synthase QueC"/>
    <property type="match status" value="1"/>
</dbReference>
<dbReference type="PANTHER" id="PTHR42914">
    <property type="entry name" value="7-CYANO-7-DEAZAGUANINE SYNTHASE"/>
    <property type="match status" value="1"/>
</dbReference>
<dbReference type="PANTHER" id="PTHR42914:SF1">
    <property type="entry name" value="7-CYANO-7-DEAZAGUANINE SYNTHASE"/>
    <property type="match status" value="1"/>
</dbReference>
<dbReference type="Pfam" id="PF06508">
    <property type="entry name" value="QueC"/>
    <property type="match status" value="1"/>
</dbReference>
<dbReference type="PIRSF" id="PIRSF006293">
    <property type="entry name" value="ExsB"/>
    <property type="match status" value="1"/>
</dbReference>
<dbReference type="SUPFAM" id="SSF52402">
    <property type="entry name" value="Adenine nucleotide alpha hydrolases-like"/>
    <property type="match status" value="1"/>
</dbReference>
<organism>
    <name type="scientific">Ralstonia nicotianae (strain ATCC BAA-1114 / GMI1000)</name>
    <name type="common">Ralstonia solanacearum</name>
    <dbReference type="NCBI Taxonomy" id="267608"/>
    <lineage>
        <taxon>Bacteria</taxon>
        <taxon>Pseudomonadati</taxon>
        <taxon>Pseudomonadota</taxon>
        <taxon>Betaproteobacteria</taxon>
        <taxon>Burkholderiales</taxon>
        <taxon>Burkholderiaceae</taxon>
        <taxon>Ralstonia</taxon>
        <taxon>Ralstonia solanacearum species complex</taxon>
    </lineage>
</organism>
<sequence length="224" mass="23879">MKKRAIVLLSGGLDSATVLAMANAQGFETYALSMRYGQRHSSELEAAKKVAAALGAVRHEIVDLDLRRFGGSALTDDALEVPTTGVQEGIPITYVPARNTIMLSLALGWAEAVGARDLFFGANAVDYSGYPDCRPEYVAAYETLANLATKAGVEGDHIRVNAPIIAMTKAEIIQAGARLGVDYSLTVSCYQADDEGRACGVCDSCRIRRAGFEAAAVPDPTRYR</sequence>
<reference key="1">
    <citation type="journal article" date="2002" name="Nature">
        <title>Genome sequence of the plant pathogen Ralstonia solanacearum.</title>
        <authorList>
            <person name="Salanoubat M."/>
            <person name="Genin S."/>
            <person name="Artiguenave F."/>
            <person name="Gouzy J."/>
            <person name="Mangenot S."/>
            <person name="Arlat M."/>
            <person name="Billault A."/>
            <person name="Brottier P."/>
            <person name="Camus J.-C."/>
            <person name="Cattolico L."/>
            <person name="Chandler M."/>
            <person name="Choisne N."/>
            <person name="Claudel-Renard C."/>
            <person name="Cunnac S."/>
            <person name="Demange N."/>
            <person name="Gaspin C."/>
            <person name="Lavie M."/>
            <person name="Moisan A."/>
            <person name="Robert C."/>
            <person name="Saurin W."/>
            <person name="Schiex T."/>
            <person name="Siguier P."/>
            <person name="Thebault P."/>
            <person name="Whalen M."/>
            <person name="Wincker P."/>
            <person name="Levy M."/>
            <person name="Weissenbach J."/>
            <person name="Boucher C.A."/>
        </authorList>
    </citation>
    <scope>NUCLEOTIDE SEQUENCE [LARGE SCALE GENOMIC DNA]</scope>
    <source>
        <strain>ATCC BAA-1114 / GMI1000</strain>
    </source>
</reference>